<reference key="1">
    <citation type="journal article" date="2008" name="PLoS ONE">
        <title>Survival in nuclear waste, extreme resistance, and potential applications gleaned from the genome sequence of Kineococcus radiotolerans SRS30216.</title>
        <authorList>
            <person name="Bagwell C.E."/>
            <person name="Bhat S."/>
            <person name="Hawkins G.M."/>
            <person name="Smith B.W."/>
            <person name="Biswas T."/>
            <person name="Hoover T.R."/>
            <person name="Saunders E."/>
            <person name="Han C.S."/>
            <person name="Tsodikov O.V."/>
            <person name="Shimkets L.J."/>
        </authorList>
    </citation>
    <scope>NUCLEOTIDE SEQUENCE [LARGE SCALE GENOMIC DNA]</scope>
    <source>
        <strain>ATCC BAA-149 / DSM 14245 / SRS30216</strain>
    </source>
</reference>
<evidence type="ECO:0000255" key="1">
    <source>
        <dbReference type="HAMAP-Rule" id="MF_00071"/>
    </source>
</evidence>
<comment type="function">
    <text evidence="1">Required for accurate and efficient protein synthesis under certain stress conditions. May act as a fidelity factor of the translation reaction, by catalyzing a one-codon backward translocation of tRNAs on improperly translocated ribosomes. Back-translocation proceeds from a post-translocation (POST) complex to a pre-translocation (PRE) complex, thus giving elongation factor G a second chance to translocate the tRNAs correctly. Binds to ribosomes in a GTP-dependent manner.</text>
</comment>
<comment type="catalytic activity">
    <reaction evidence="1">
        <text>GTP + H2O = GDP + phosphate + H(+)</text>
        <dbReference type="Rhea" id="RHEA:19669"/>
        <dbReference type="ChEBI" id="CHEBI:15377"/>
        <dbReference type="ChEBI" id="CHEBI:15378"/>
        <dbReference type="ChEBI" id="CHEBI:37565"/>
        <dbReference type="ChEBI" id="CHEBI:43474"/>
        <dbReference type="ChEBI" id="CHEBI:58189"/>
        <dbReference type="EC" id="3.6.5.n1"/>
    </reaction>
</comment>
<comment type="subcellular location">
    <subcellularLocation>
        <location evidence="1">Cell membrane</location>
        <topology evidence="1">Peripheral membrane protein</topology>
        <orientation evidence="1">Cytoplasmic side</orientation>
    </subcellularLocation>
</comment>
<comment type="similarity">
    <text evidence="1">Belongs to the TRAFAC class translation factor GTPase superfamily. Classic translation factor GTPase family. LepA subfamily.</text>
</comment>
<keyword id="KW-1003">Cell membrane</keyword>
<keyword id="KW-0342">GTP-binding</keyword>
<keyword id="KW-0378">Hydrolase</keyword>
<keyword id="KW-0472">Membrane</keyword>
<keyword id="KW-0547">Nucleotide-binding</keyword>
<keyword id="KW-0648">Protein biosynthesis</keyword>
<keyword id="KW-1185">Reference proteome</keyword>
<name>LEPA_KINRD</name>
<sequence>MSPMATDAPAPAATAPELLRNFCIIAHIDHGKSTLADRMLQLTGVVDARAMRAQYLDRMDIERERGITIKSQAVRMPWGYDGTDYALNMIDTPGHVDFTYEVSRSLAACEGAVLLVDAAQGIEAQTLANLYLAMENDLTIIPVLNKIDLPAAQPEKFAEELAKLIGCEPDDCLRVSGKTGVGVEPLLDQIVRQIPAPVGDADAPARAMIFDSVYDTYRGVVTYVRVIDGNLSPREKIVMMSTRATHELLEIGVSSPEPVPSKGLGVGEVGYLITGVKDVRQSKVGDTVTNAAKPSTKALGGYRDPKPMVFSGLYPIDGSDYPLLRDALDKLKLNDAALSYEPETSVALGFGFRIGFLGLLHLEIVRERLEREFNLDLISTAPSVPYEVTLEDKRVVEVTNPSEFPEGKIAEVREPVVRATVLAPSEFIGAVMELCQQRRGELQGMDYLSEDRVEMRYRLPLAEIVFDFFDQLKSRTRGYASLDYDVDGDQAADLVKVDVLLQGEQVDAFSQIVHREKAYGYGVMMAGKLKDLIPRQQFEVPIQAAIGARVIARENVRAIRKDVLAKCYGGDITRKRKLLEKQKEGKKRMKMVGRVEVPQEAFIAALSSDAAGDKAKDKNAKK</sequence>
<feature type="chain" id="PRO_1000075138" description="Elongation factor 4">
    <location>
        <begin position="1"/>
        <end position="622"/>
    </location>
</feature>
<feature type="domain" description="tr-type G">
    <location>
        <begin position="17"/>
        <end position="198"/>
    </location>
</feature>
<feature type="binding site" evidence="1">
    <location>
        <begin position="29"/>
        <end position="34"/>
    </location>
    <ligand>
        <name>GTP</name>
        <dbReference type="ChEBI" id="CHEBI:37565"/>
    </ligand>
</feature>
<feature type="binding site" evidence="1">
    <location>
        <begin position="145"/>
        <end position="148"/>
    </location>
    <ligand>
        <name>GTP</name>
        <dbReference type="ChEBI" id="CHEBI:37565"/>
    </ligand>
</feature>
<dbReference type="EC" id="3.6.5.n1" evidence="1"/>
<dbReference type="EMBL" id="CP000750">
    <property type="protein sequence ID" value="ABS04882.1"/>
    <property type="molecule type" value="Genomic_DNA"/>
</dbReference>
<dbReference type="SMR" id="A6WDJ3"/>
<dbReference type="STRING" id="266940.Krad_3418"/>
<dbReference type="KEGG" id="kra:Krad_3418"/>
<dbReference type="eggNOG" id="COG0481">
    <property type="taxonomic scope" value="Bacteria"/>
</dbReference>
<dbReference type="HOGENOM" id="CLU_009995_3_3_11"/>
<dbReference type="Proteomes" id="UP000001116">
    <property type="component" value="Chromosome"/>
</dbReference>
<dbReference type="GO" id="GO:0005886">
    <property type="term" value="C:plasma membrane"/>
    <property type="evidence" value="ECO:0007669"/>
    <property type="project" value="UniProtKB-SubCell"/>
</dbReference>
<dbReference type="GO" id="GO:0005525">
    <property type="term" value="F:GTP binding"/>
    <property type="evidence" value="ECO:0007669"/>
    <property type="project" value="UniProtKB-UniRule"/>
</dbReference>
<dbReference type="GO" id="GO:0003924">
    <property type="term" value="F:GTPase activity"/>
    <property type="evidence" value="ECO:0007669"/>
    <property type="project" value="UniProtKB-UniRule"/>
</dbReference>
<dbReference type="GO" id="GO:0043022">
    <property type="term" value="F:ribosome binding"/>
    <property type="evidence" value="ECO:0007669"/>
    <property type="project" value="UniProtKB-UniRule"/>
</dbReference>
<dbReference type="GO" id="GO:0003746">
    <property type="term" value="F:translation elongation factor activity"/>
    <property type="evidence" value="ECO:0007669"/>
    <property type="project" value="UniProtKB-UniRule"/>
</dbReference>
<dbReference type="GO" id="GO:0045727">
    <property type="term" value="P:positive regulation of translation"/>
    <property type="evidence" value="ECO:0007669"/>
    <property type="project" value="UniProtKB-UniRule"/>
</dbReference>
<dbReference type="CDD" id="cd03699">
    <property type="entry name" value="EF4_II"/>
    <property type="match status" value="1"/>
</dbReference>
<dbReference type="CDD" id="cd16260">
    <property type="entry name" value="EF4_III"/>
    <property type="match status" value="1"/>
</dbReference>
<dbReference type="CDD" id="cd01890">
    <property type="entry name" value="LepA"/>
    <property type="match status" value="1"/>
</dbReference>
<dbReference type="CDD" id="cd03709">
    <property type="entry name" value="lepA_C"/>
    <property type="match status" value="1"/>
</dbReference>
<dbReference type="FunFam" id="3.40.50.300:FF:000078">
    <property type="entry name" value="Elongation factor 4"/>
    <property type="match status" value="1"/>
</dbReference>
<dbReference type="FunFam" id="2.40.30.10:FF:000015">
    <property type="entry name" value="Translation factor GUF1, mitochondrial"/>
    <property type="match status" value="1"/>
</dbReference>
<dbReference type="FunFam" id="3.30.70.240:FF:000007">
    <property type="entry name" value="Translation factor GUF1, mitochondrial"/>
    <property type="match status" value="1"/>
</dbReference>
<dbReference type="FunFam" id="3.30.70.2570:FF:000001">
    <property type="entry name" value="Translation factor GUF1, mitochondrial"/>
    <property type="match status" value="1"/>
</dbReference>
<dbReference type="FunFam" id="3.30.70.870:FF:000004">
    <property type="entry name" value="Translation factor GUF1, mitochondrial"/>
    <property type="match status" value="1"/>
</dbReference>
<dbReference type="Gene3D" id="3.30.70.240">
    <property type="match status" value="1"/>
</dbReference>
<dbReference type="Gene3D" id="3.30.70.2570">
    <property type="entry name" value="Elongation factor 4, C-terminal domain"/>
    <property type="match status" value="1"/>
</dbReference>
<dbReference type="Gene3D" id="3.30.70.870">
    <property type="entry name" value="Elongation Factor G (Translational Gtpase), domain 3"/>
    <property type="match status" value="1"/>
</dbReference>
<dbReference type="Gene3D" id="3.40.50.300">
    <property type="entry name" value="P-loop containing nucleotide triphosphate hydrolases"/>
    <property type="match status" value="1"/>
</dbReference>
<dbReference type="Gene3D" id="2.40.30.10">
    <property type="entry name" value="Translation factors"/>
    <property type="match status" value="1"/>
</dbReference>
<dbReference type="HAMAP" id="MF_00071">
    <property type="entry name" value="LepA"/>
    <property type="match status" value="1"/>
</dbReference>
<dbReference type="InterPro" id="IPR006297">
    <property type="entry name" value="EF-4"/>
</dbReference>
<dbReference type="InterPro" id="IPR035647">
    <property type="entry name" value="EFG_III/V"/>
</dbReference>
<dbReference type="InterPro" id="IPR000640">
    <property type="entry name" value="EFG_V-like"/>
</dbReference>
<dbReference type="InterPro" id="IPR004161">
    <property type="entry name" value="EFTu-like_2"/>
</dbReference>
<dbReference type="InterPro" id="IPR031157">
    <property type="entry name" value="G_TR_CS"/>
</dbReference>
<dbReference type="InterPro" id="IPR038363">
    <property type="entry name" value="LepA_C_sf"/>
</dbReference>
<dbReference type="InterPro" id="IPR013842">
    <property type="entry name" value="LepA_CTD"/>
</dbReference>
<dbReference type="InterPro" id="IPR035654">
    <property type="entry name" value="LepA_IV"/>
</dbReference>
<dbReference type="InterPro" id="IPR027417">
    <property type="entry name" value="P-loop_NTPase"/>
</dbReference>
<dbReference type="InterPro" id="IPR005225">
    <property type="entry name" value="Small_GTP-bd"/>
</dbReference>
<dbReference type="InterPro" id="IPR000795">
    <property type="entry name" value="T_Tr_GTP-bd_dom"/>
</dbReference>
<dbReference type="InterPro" id="IPR009000">
    <property type="entry name" value="Transl_B-barrel_sf"/>
</dbReference>
<dbReference type="NCBIfam" id="TIGR01393">
    <property type="entry name" value="lepA"/>
    <property type="match status" value="1"/>
</dbReference>
<dbReference type="NCBIfam" id="TIGR00231">
    <property type="entry name" value="small_GTP"/>
    <property type="match status" value="1"/>
</dbReference>
<dbReference type="PANTHER" id="PTHR43512:SF4">
    <property type="entry name" value="TRANSLATION FACTOR GUF1 HOMOLOG, CHLOROPLASTIC"/>
    <property type="match status" value="1"/>
</dbReference>
<dbReference type="PANTHER" id="PTHR43512">
    <property type="entry name" value="TRANSLATION FACTOR GUF1-RELATED"/>
    <property type="match status" value="1"/>
</dbReference>
<dbReference type="Pfam" id="PF00679">
    <property type="entry name" value="EFG_C"/>
    <property type="match status" value="1"/>
</dbReference>
<dbReference type="Pfam" id="PF00009">
    <property type="entry name" value="GTP_EFTU"/>
    <property type="match status" value="1"/>
</dbReference>
<dbReference type="Pfam" id="PF03144">
    <property type="entry name" value="GTP_EFTU_D2"/>
    <property type="match status" value="1"/>
</dbReference>
<dbReference type="Pfam" id="PF06421">
    <property type="entry name" value="LepA_C"/>
    <property type="match status" value="1"/>
</dbReference>
<dbReference type="PRINTS" id="PR00315">
    <property type="entry name" value="ELONGATNFCT"/>
</dbReference>
<dbReference type="SMART" id="SM00838">
    <property type="entry name" value="EFG_C"/>
    <property type="match status" value="1"/>
</dbReference>
<dbReference type="SUPFAM" id="SSF54980">
    <property type="entry name" value="EF-G C-terminal domain-like"/>
    <property type="match status" value="2"/>
</dbReference>
<dbReference type="SUPFAM" id="SSF52540">
    <property type="entry name" value="P-loop containing nucleoside triphosphate hydrolases"/>
    <property type="match status" value="1"/>
</dbReference>
<dbReference type="SUPFAM" id="SSF50447">
    <property type="entry name" value="Translation proteins"/>
    <property type="match status" value="1"/>
</dbReference>
<dbReference type="PROSITE" id="PS00301">
    <property type="entry name" value="G_TR_1"/>
    <property type="match status" value="1"/>
</dbReference>
<dbReference type="PROSITE" id="PS51722">
    <property type="entry name" value="G_TR_2"/>
    <property type="match status" value="1"/>
</dbReference>
<organism>
    <name type="scientific">Kineococcus radiotolerans (strain ATCC BAA-149 / DSM 14245 / SRS30216)</name>
    <dbReference type="NCBI Taxonomy" id="266940"/>
    <lineage>
        <taxon>Bacteria</taxon>
        <taxon>Bacillati</taxon>
        <taxon>Actinomycetota</taxon>
        <taxon>Actinomycetes</taxon>
        <taxon>Kineosporiales</taxon>
        <taxon>Kineosporiaceae</taxon>
        <taxon>Kineococcus</taxon>
    </lineage>
</organism>
<protein>
    <recommendedName>
        <fullName evidence="1">Elongation factor 4</fullName>
        <shortName evidence="1">EF-4</shortName>
        <ecNumber evidence="1">3.6.5.n1</ecNumber>
    </recommendedName>
    <alternativeName>
        <fullName evidence="1">Ribosomal back-translocase LepA</fullName>
    </alternativeName>
</protein>
<gene>
    <name evidence="1" type="primary">lepA</name>
    <name type="ordered locus">Krad_3418</name>
</gene>
<accession>A6WDJ3</accession>
<proteinExistence type="inferred from homology"/>